<reference key="1">
    <citation type="journal article" date="2006" name="PLoS Genet.">
        <title>Who ate whom? Adaptive Helicobacter genomic changes that accompanied a host jump from early humans to large felines.</title>
        <authorList>
            <person name="Eppinger M."/>
            <person name="Baar C."/>
            <person name="Linz B."/>
            <person name="Raddatz G."/>
            <person name="Lanz C."/>
            <person name="Keller H."/>
            <person name="Morelli G."/>
            <person name="Gressmann H."/>
            <person name="Achtman M."/>
            <person name="Schuster S.C."/>
        </authorList>
    </citation>
    <scope>NUCLEOTIDE SEQUENCE [LARGE SCALE GENOMIC DNA]</scope>
    <source>
        <strain>Sheeba</strain>
    </source>
</reference>
<gene>
    <name evidence="1" type="primary">ureG</name>
    <name type="ordered locus">Hac_1537</name>
</gene>
<name>UREG_HELAH</name>
<accession>Q17VS2</accession>
<sequence>MVKIGVCGPVGSGKTALIEALTRHMSKDYDMAVITNDIYTKEDAEFMCKNSVMPRDRIIGVETGGCPHTAIREDASMNLEAVEEMHGRFPNLELLLIESGGDNLSATFNPELADFTIFVIDVAEGDKIPRKGGPGITRSDLLVINKIDLAPYVGADLKVMERDSKKMRGEKPFIFTNIRSKEGLDDVIAWIKRNALLED</sequence>
<evidence type="ECO:0000255" key="1">
    <source>
        <dbReference type="HAMAP-Rule" id="MF_01389"/>
    </source>
</evidence>
<comment type="function">
    <text evidence="1">Facilitates the functional incorporation of the urease nickel metallocenter. This process requires GTP hydrolysis, probably effectuated by UreG.</text>
</comment>
<comment type="subunit">
    <text evidence="1">Homodimer. UreH, UreF and UreG form a complex that acts as a GTP-hydrolysis-dependent molecular chaperone, activating the urease apoprotein by helping to assemble the nickel containing metallocenter of UreC. The UreE protein probably delivers the nickel.</text>
</comment>
<comment type="subcellular location">
    <subcellularLocation>
        <location evidence="1">Cytoplasm</location>
    </subcellularLocation>
</comment>
<comment type="similarity">
    <text evidence="1">Belongs to the SIMIBI class G3E GTPase family. UreG subfamily.</text>
</comment>
<organism>
    <name type="scientific">Helicobacter acinonychis (strain Sheeba)</name>
    <dbReference type="NCBI Taxonomy" id="382638"/>
    <lineage>
        <taxon>Bacteria</taxon>
        <taxon>Pseudomonadati</taxon>
        <taxon>Campylobacterota</taxon>
        <taxon>Epsilonproteobacteria</taxon>
        <taxon>Campylobacterales</taxon>
        <taxon>Helicobacteraceae</taxon>
        <taxon>Helicobacter</taxon>
    </lineage>
</organism>
<dbReference type="EMBL" id="AM260522">
    <property type="protein sequence ID" value="CAK00254.1"/>
    <property type="molecule type" value="Genomic_DNA"/>
</dbReference>
<dbReference type="RefSeq" id="WP_011578340.1">
    <property type="nucleotide sequence ID" value="NC_008229.1"/>
</dbReference>
<dbReference type="SMR" id="Q17VS2"/>
<dbReference type="STRING" id="382638.Hac_1537"/>
<dbReference type="GeneID" id="31758805"/>
<dbReference type="KEGG" id="hac:Hac_1537"/>
<dbReference type="eggNOG" id="COG0378">
    <property type="taxonomic scope" value="Bacteria"/>
</dbReference>
<dbReference type="HOGENOM" id="CLU_072144_1_0_7"/>
<dbReference type="OrthoDB" id="9802035at2"/>
<dbReference type="BioCyc" id="HACI382638:HAC_RS06520-MONOMER"/>
<dbReference type="Proteomes" id="UP000000775">
    <property type="component" value="Chromosome"/>
</dbReference>
<dbReference type="GO" id="GO:0005737">
    <property type="term" value="C:cytoplasm"/>
    <property type="evidence" value="ECO:0007669"/>
    <property type="project" value="UniProtKB-SubCell"/>
</dbReference>
<dbReference type="GO" id="GO:0005525">
    <property type="term" value="F:GTP binding"/>
    <property type="evidence" value="ECO:0007669"/>
    <property type="project" value="UniProtKB-KW"/>
</dbReference>
<dbReference type="GO" id="GO:0003924">
    <property type="term" value="F:GTPase activity"/>
    <property type="evidence" value="ECO:0007669"/>
    <property type="project" value="InterPro"/>
</dbReference>
<dbReference type="GO" id="GO:0016151">
    <property type="term" value="F:nickel cation binding"/>
    <property type="evidence" value="ECO:0007669"/>
    <property type="project" value="InterPro"/>
</dbReference>
<dbReference type="GO" id="GO:0043419">
    <property type="term" value="P:urea catabolic process"/>
    <property type="evidence" value="ECO:0007669"/>
    <property type="project" value="InterPro"/>
</dbReference>
<dbReference type="CDD" id="cd05540">
    <property type="entry name" value="UreG"/>
    <property type="match status" value="1"/>
</dbReference>
<dbReference type="FunFam" id="3.40.50.300:FF:000208">
    <property type="entry name" value="Urease accessory protein UreG"/>
    <property type="match status" value="1"/>
</dbReference>
<dbReference type="Gene3D" id="3.40.50.300">
    <property type="entry name" value="P-loop containing nucleotide triphosphate hydrolases"/>
    <property type="match status" value="1"/>
</dbReference>
<dbReference type="HAMAP" id="MF_01389">
    <property type="entry name" value="UreG"/>
    <property type="match status" value="1"/>
</dbReference>
<dbReference type="InterPro" id="IPR003495">
    <property type="entry name" value="CobW/HypB/UreG_nucleotide-bd"/>
</dbReference>
<dbReference type="InterPro" id="IPR027417">
    <property type="entry name" value="P-loop_NTPase"/>
</dbReference>
<dbReference type="InterPro" id="IPR004400">
    <property type="entry name" value="UreG"/>
</dbReference>
<dbReference type="NCBIfam" id="TIGR00101">
    <property type="entry name" value="ureG"/>
    <property type="match status" value="1"/>
</dbReference>
<dbReference type="PANTHER" id="PTHR31715">
    <property type="entry name" value="UREASE ACCESSORY PROTEIN G"/>
    <property type="match status" value="1"/>
</dbReference>
<dbReference type="PANTHER" id="PTHR31715:SF0">
    <property type="entry name" value="UREASE ACCESSORY PROTEIN G"/>
    <property type="match status" value="1"/>
</dbReference>
<dbReference type="Pfam" id="PF02492">
    <property type="entry name" value="cobW"/>
    <property type="match status" value="1"/>
</dbReference>
<dbReference type="PIRSF" id="PIRSF005624">
    <property type="entry name" value="Ni-bind_GTPase"/>
    <property type="match status" value="1"/>
</dbReference>
<dbReference type="SUPFAM" id="SSF52540">
    <property type="entry name" value="P-loop containing nucleoside triphosphate hydrolases"/>
    <property type="match status" value="1"/>
</dbReference>
<feature type="chain" id="PRO_1000145177" description="Urease accessory protein UreG">
    <location>
        <begin position="1"/>
        <end position="199"/>
    </location>
</feature>
<feature type="binding site" evidence="1">
    <location>
        <begin position="8"/>
        <end position="15"/>
    </location>
    <ligand>
        <name>GTP</name>
        <dbReference type="ChEBI" id="CHEBI:37565"/>
    </ligand>
</feature>
<proteinExistence type="inferred from homology"/>
<keyword id="KW-0143">Chaperone</keyword>
<keyword id="KW-0963">Cytoplasm</keyword>
<keyword id="KW-0342">GTP-binding</keyword>
<keyword id="KW-0996">Nickel insertion</keyword>
<keyword id="KW-0547">Nucleotide-binding</keyword>
<protein>
    <recommendedName>
        <fullName evidence="1">Urease accessory protein UreG</fullName>
    </recommendedName>
</protein>